<protein>
    <recommendedName>
        <fullName>Probable kinetochore protein nuf2</fullName>
    </recommendedName>
</protein>
<reference key="1">
    <citation type="journal article" date="2005" name="Nature">
        <title>Genomic sequence of the pathogenic and allergenic filamentous fungus Aspergillus fumigatus.</title>
        <authorList>
            <person name="Nierman W.C."/>
            <person name="Pain A."/>
            <person name="Anderson M.J."/>
            <person name="Wortman J.R."/>
            <person name="Kim H.S."/>
            <person name="Arroyo J."/>
            <person name="Berriman M."/>
            <person name="Abe K."/>
            <person name="Archer D.B."/>
            <person name="Bermejo C."/>
            <person name="Bennett J.W."/>
            <person name="Bowyer P."/>
            <person name="Chen D."/>
            <person name="Collins M."/>
            <person name="Coulsen R."/>
            <person name="Davies R."/>
            <person name="Dyer P.S."/>
            <person name="Farman M.L."/>
            <person name="Fedorova N."/>
            <person name="Fedorova N.D."/>
            <person name="Feldblyum T.V."/>
            <person name="Fischer R."/>
            <person name="Fosker N."/>
            <person name="Fraser A."/>
            <person name="Garcia J.L."/>
            <person name="Garcia M.J."/>
            <person name="Goble A."/>
            <person name="Goldman G.H."/>
            <person name="Gomi K."/>
            <person name="Griffith-Jones S."/>
            <person name="Gwilliam R."/>
            <person name="Haas B.J."/>
            <person name="Haas H."/>
            <person name="Harris D.E."/>
            <person name="Horiuchi H."/>
            <person name="Huang J."/>
            <person name="Humphray S."/>
            <person name="Jimenez J."/>
            <person name="Keller N."/>
            <person name="Khouri H."/>
            <person name="Kitamoto K."/>
            <person name="Kobayashi T."/>
            <person name="Konzack S."/>
            <person name="Kulkarni R."/>
            <person name="Kumagai T."/>
            <person name="Lafton A."/>
            <person name="Latge J.-P."/>
            <person name="Li W."/>
            <person name="Lord A."/>
            <person name="Lu C."/>
            <person name="Majoros W.H."/>
            <person name="May G.S."/>
            <person name="Miller B.L."/>
            <person name="Mohamoud Y."/>
            <person name="Molina M."/>
            <person name="Monod M."/>
            <person name="Mouyna I."/>
            <person name="Mulligan S."/>
            <person name="Murphy L.D."/>
            <person name="O'Neil S."/>
            <person name="Paulsen I."/>
            <person name="Penalva M.A."/>
            <person name="Pertea M."/>
            <person name="Price C."/>
            <person name="Pritchard B.L."/>
            <person name="Quail M.A."/>
            <person name="Rabbinowitsch E."/>
            <person name="Rawlins N."/>
            <person name="Rajandream M.A."/>
            <person name="Reichard U."/>
            <person name="Renauld H."/>
            <person name="Robson G.D."/>
            <person name="Rodriguez de Cordoba S."/>
            <person name="Rodriguez-Pena J.M."/>
            <person name="Ronning C.M."/>
            <person name="Rutter S."/>
            <person name="Salzberg S.L."/>
            <person name="Sanchez M."/>
            <person name="Sanchez-Ferrero J.C."/>
            <person name="Saunders D."/>
            <person name="Seeger K."/>
            <person name="Squares R."/>
            <person name="Squares S."/>
            <person name="Takeuchi M."/>
            <person name="Tekaia F."/>
            <person name="Turner G."/>
            <person name="Vazquez de Aldana C.R."/>
            <person name="Weidman J."/>
            <person name="White O."/>
            <person name="Woodward J.R."/>
            <person name="Yu J.-H."/>
            <person name="Fraser C.M."/>
            <person name="Galagan J.E."/>
            <person name="Asai K."/>
            <person name="Machida M."/>
            <person name="Hall N."/>
            <person name="Barrell B.G."/>
            <person name="Denning D.W."/>
        </authorList>
    </citation>
    <scope>NUCLEOTIDE SEQUENCE [LARGE SCALE GENOMIC DNA]</scope>
    <source>
        <strain>ATCC MYA-4609 / CBS 101355 / FGSC A1100 / Af293</strain>
    </source>
</reference>
<sequence>MAYNHRMSQQFHGTQQHHNRGRKKEDENDALMRLPDKEIAGCINDIGIPFTAADLIKPNPQQIQMVFEWFAELLMNTTKETVEPAMRAAAEDICGDYPDIVPLETRNLMGFFISLRRLMMECGVNDFTFTDLTKPTHDRLVKIFSYLINFVRFRESQTQVIDEHFNKTEKTKARIDTLFMENQEMEQRLEEMRRSLKANEAQVKEKVRRNDELKARLLELRRNQERIAETLERVKADKARRQAQLEEKTERSVRTRQEVEKLRPYAMQSPVSLQSALTELSENLLREKAQIDAMEKRARALQTSSDTFTVVGNDVQACIKLLEDISVELQKEEEEESRASRNKEAISERGNNVREVEQTEKLLQRQLARWNERIEALRKNAQEKAEVAQARMDELRDVQKKLREERAEKQRDMERRRIRIEQTEKKMADLKENIENEIQSAHEEYLKLESHIKLYITEMEKCL</sequence>
<comment type="function">
    <text evidence="1">Acts as a component of the essential kinetochore-associated NDC80 complex, which is required for chromosome segregation and spindle checkpoint activity.</text>
</comment>
<comment type="subunit">
    <text evidence="1">Component of the NDC80 complex, which consists of at least ndc80, nuf2 and spc24.</text>
</comment>
<comment type="subcellular location">
    <subcellularLocation>
        <location evidence="1">Nucleus</location>
    </subcellularLocation>
    <subcellularLocation>
        <location evidence="1">Chromosome</location>
        <location evidence="1">Centromere</location>
        <location evidence="1">Kinetochore</location>
    </subcellularLocation>
    <text evidence="1">Associated with kinetochores.</text>
</comment>
<comment type="similarity">
    <text evidence="4">Belongs to the NUF2 family.</text>
</comment>
<keyword id="KW-0131">Cell cycle</keyword>
<keyword id="KW-0132">Cell division</keyword>
<keyword id="KW-0137">Centromere</keyword>
<keyword id="KW-0158">Chromosome</keyword>
<keyword id="KW-0175">Coiled coil</keyword>
<keyword id="KW-0995">Kinetochore</keyword>
<keyword id="KW-0498">Mitosis</keyword>
<keyword id="KW-0539">Nucleus</keyword>
<keyword id="KW-1185">Reference proteome</keyword>
<gene>
    <name type="primary">nuf2</name>
    <name type="ORF">AFUA_5G11350</name>
</gene>
<accession>Q4WVA0</accession>
<feature type="chain" id="PRO_0000246645" description="Probable kinetochore protein nuf2">
    <location>
        <begin position="1"/>
        <end position="463"/>
    </location>
</feature>
<feature type="region of interest" description="Disordered" evidence="3">
    <location>
        <begin position="1"/>
        <end position="26"/>
    </location>
</feature>
<feature type="region of interest" description="Disordered" evidence="3">
    <location>
        <begin position="331"/>
        <end position="354"/>
    </location>
</feature>
<feature type="coiled-coil region" evidence="2">
    <location>
        <begin position="166"/>
        <end position="455"/>
    </location>
</feature>
<feature type="compositionally biased region" description="Polar residues" evidence="3">
    <location>
        <begin position="1"/>
        <end position="14"/>
    </location>
</feature>
<feature type="compositionally biased region" description="Basic and acidic residues" evidence="3">
    <location>
        <begin position="337"/>
        <end position="354"/>
    </location>
</feature>
<proteinExistence type="inferred from homology"/>
<evidence type="ECO:0000250" key="1"/>
<evidence type="ECO:0000255" key="2"/>
<evidence type="ECO:0000256" key="3">
    <source>
        <dbReference type="SAM" id="MobiDB-lite"/>
    </source>
</evidence>
<evidence type="ECO:0000305" key="4"/>
<organism>
    <name type="scientific">Aspergillus fumigatus (strain ATCC MYA-4609 / CBS 101355 / FGSC A1100 / Af293)</name>
    <name type="common">Neosartorya fumigata</name>
    <dbReference type="NCBI Taxonomy" id="330879"/>
    <lineage>
        <taxon>Eukaryota</taxon>
        <taxon>Fungi</taxon>
        <taxon>Dikarya</taxon>
        <taxon>Ascomycota</taxon>
        <taxon>Pezizomycotina</taxon>
        <taxon>Eurotiomycetes</taxon>
        <taxon>Eurotiomycetidae</taxon>
        <taxon>Eurotiales</taxon>
        <taxon>Aspergillaceae</taxon>
        <taxon>Aspergillus</taxon>
        <taxon>Aspergillus subgen. Fumigati</taxon>
    </lineage>
</organism>
<name>NUF2_ASPFU</name>
<dbReference type="EMBL" id="AAHF01000003">
    <property type="protein sequence ID" value="EAL91476.2"/>
    <property type="molecule type" value="Genomic_DNA"/>
</dbReference>
<dbReference type="RefSeq" id="XP_753514.2">
    <property type="nucleotide sequence ID" value="XM_748421.2"/>
</dbReference>
<dbReference type="SMR" id="Q4WVA0"/>
<dbReference type="FunCoup" id="Q4WVA0">
    <property type="interactions" value="282"/>
</dbReference>
<dbReference type="STRING" id="330879.Q4WVA0"/>
<dbReference type="EnsemblFungi" id="EAL91476">
    <property type="protein sequence ID" value="EAL91476"/>
    <property type="gene ID" value="AFUA_5G11350"/>
</dbReference>
<dbReference type="GeneID" id="3511093"/>
<dbReference type="KEGG" id="afm:AFUA_5G11350"/>
<dbReference type="VEuPathDB" id="FungiDB:Afu5g11350"/>
<dbReference type="eggNOG" id="KOG4438">
    <property type="taxonomic scope" value="Eukaryota"/>
</dbReference>
<dbReference type="HOGENOM" id="CLU_025461_2_1_1"/>
<dbReference type="InParanoid" id="Q4WVA0"/>
<dbReference type="OMA" id="YLKMEAH"/>
<dbReference type="OrthoDB" id="8194677at2759"/>
<dbReference type="Proteomes" id="UP000002530">
    <property type="component" value="Chromosome 5"/>
</dbReference>
<dbReference type="GO" id="GO:0031262">
    <property type="term" value="C:Ndc80 complex"/>
    <property type="evidence" value="ECO:0000250"/>
    <property type="project" value="UniProtKB"/>
</dbReference>
<dbReference type="GO" id="GO:0005634">
    <property type="term" value="C:nucleus"/>
    <property type="evidence" value="ECO:0007669"/>
    <property type="project" value="UniProtKB-SubCell"/>
</dbReference>
<dbReference type="GO" id="GO:0008017">
    <property type="term" value="F:microtubule binding"/>
    <property type="evidence" value="ECO:0000250"/>
    <property type="project" value="UniProtKB"/>
</dbReference>
<dbReference type="GO" id="GO:0044877">
    <property type="term" value="F:protein-containing complex binding"/>
    <property type="evidence" value="ECO:0000318"/>
    <property type="project" value="GO_Central"/>
</dbReference>
<dbReference type="GO" id="GO:0051315">
    <property type="term" value="P:attachment of mitotic spindle microtubules to kinetochore"/>
    <property type="evidence" value="ECO:0000318"/>
    <property type="project" value="GO_Central"/>
</dbReference>
<dbReference type="GO" id="GO:0051301">
    <property type="term" value="P:cell division"/>
    <property type="evidence" value="ECO:0007669"/>
    <property type="project" value="UniProtKB-KW"/>
</dbReference>
<dbReference type="GO" id="GO:0051383">
    <property type="term" value="P:kinetochore organization"/>
    <property type="evidence" value="ECO:0000318"/>
    <property type="project" value="GO_Central"/>
</dbReference>
<dbReference type="GO" id="GO:0045132">
    <property type="term" value="P:meiotic chromosome segregation"/>
    <property type="evidence" value="ECO:0000318"/>
    <property type="project" value="GO_Central"/>
</dbReference>
<dbReference type="GO" id="GO:0007052">
    <property type="term" value="P:mitotic spindle organization"/>
    <property type="evidence" value="ECO:0000318"/>
    <property type="project" value="GO_Central"/>
</dbReference>
<dbReference type="FunFam" id="1.10.418.60:FF:000003">
    <property type="entry name" value="Probable kinetochore protein nuf2"/>
    <property type="match status" value="1"/>
</dbReference>
<dbReference type="Gene3D" id="1.10.418.60">
    <property type="entry name" value="Ncd80 complex, Nuf2 subunit"/>
    <property type="match status" value="1"/>
</dbReference>
<dbReference type="InterPro" id="IPR005549">
    <property type="entry name" value="Kinetochore_Nuf2_N"/>
</dbReference>
<dbReference type="InterPro" id="IPR041112">
    <property type="entry name" value="Nuf2_DHR10-like"/>
</dbReference>
<dbReference type="InterPro" id="IPR038275">
    <property type="entry name" value="Nuf2_N_sf"/>
</dbReference>
<dbReference type="PANTHER" id="PTHR21650:SF2">
    <property type="entry name" value="KINETOCHORE PROTEIN NUF2"/>
    <property type="match status" value="1"/>
</dbReference>
<dbReference type="PANTHER" id="PTHR21650">
    <property type="entry name" value="MEMBRALIN/KINETOCHORE PROTEIN NUF2"/>
    <property type="match status" value="1"/>
</dbReference>
<dbReference type="Pfam" id="PF03800">
    <property type="entry name" value="Nuf2"/>
    <property type="match status" value="1"/>
</dbReference>
<dbReference type="Pfam" id="PF18595">
    <property type="entry name" value="Nuf2_DHR10-like"/>
    <property type="match status" value="1"/>
</dbReference>